<reference key="1">
    <citation type="book" date="2006" name="Gram positive pathogens, 2nd edition">
        <title>The Staphylococcus aureus NCTC 8325 genome.</title>
        <editorList>
            <person name="Fischetti V."/>
            <person name="Novick R."/>
            <person name="Ferretti J."/>
            <person name="Portnoy D."/>
            <person name="Rood J."/>
        </editorList>
        <authorList>
            <person name="Gillaspy A.F."/>
            <person name="Worrell V."/>
            <person name="Orvis J."/>
            <person name="Roe B.A."/>
            <person name="Dyer D.W."/>
            <person name="Iandolo J.J."/>
        </authorList>
    </citation>
    <scope>NUCLEOTIDE SEQUENCE [LARGE SCALE GENOMIC DNA]</scope>
    <source>
        <strain>NCTC 8325 / PS 47</strain>
    </source>
</reference>
<reference key="2">
    <citation type="journal article" date="2013" name="Mol. Microbiol.">
        <title>The Staphylococcus aureus Opp1 ABC transporter imports nickel and cobalt in zinc-depleted conditions and contributes to virulence.</title>
        <authorList>
            <person name="Remy L."/>
            <person name="Carriere M."/>
            <person name="Derre-Bobillot A."/>
            <person name="Martini C."/>
            <person name="Sanguinetti M."/>
            <person name="Borezee-Durant E."/>
        </authorList>
    </citation>
    <scope>FUNCTION</scope>
    <scope>ACTIVITY REGULATION</scope>
    <scope>SUBUNIT</scope>
    <scope>INDUCTION</scope>
    <scope>DISRUPTION PHENOTYPE</scope>
    <source>
        <strain>RN6390</strain>
    </source>
</reference>
<reference key="3">
    <citation type="journal article" date="2018" name="Proc. Natl. Acad. Sci. U.S.A.">
        <title>Mechanistic insights into staphylopine-mediated metal acquisition.</title>
        <authorList>
            <person name="Song L."/>
            <person name="Zhang Y."/>
            <person name="Chen W."/>
            <person name="Gu T."/>
            <person name="Zhang S.Y."/>
            <person name="Ji Q."/>
        </authorList>
    </citation>
    <scope>FUNCTION</scope>
    <scope>SUBUNIT</scope>
</reference>
<dbReference type="EC" id="7.2.2.-" evidence="6"/>
<dbReference type="EMBL" id="CP000253">
    <property type="protein sequence ID" value="ABD31768.1"/>
    <property type="molecule type" value="Genomic_DNA"/>
</dbReference>
<dbReference type="RefSeq" id="WP_000173869.1">
    <property type="nucleotide sequence ID" value="NZ_LS483365.1"/>
</dbReference>
<dbReference type="RefSeq" id="YP_501223.1">
    <property type="nucleotide sequence ID" value="NC_007795.1"/>
</dbReference>
<dbReference type="SMR" id="Q2FVF0"/>
<dbReference type="STRING" id="93061.SAOUHSC_02764"/>
<dbReference type="TCDB" id="3.A.1.5.43">
    <property type="family name" value="the atp-binding cassette (abc) superfamily"/>
</dbReference>
<dbReference type="PaxDb" id="1280-SAXN108_2718"/>
<dbReference type="GeneID" id="3921419"/>
<dbReference type="KEGG" id="sao:SAOUHSC_02764"/>
<dbReference type="PATRIC" id="fig|93061.5.peg.2499"/>
<dbReference type="eggNOG" id="COG0444">
    <property type="taxonomic scope" value="Bacteria"/>
</dbReference>
<dbReference type="HOGENOM" id="CLU_000604_1_23_9"/>
<dbReference type="OrthoDB" id="9802264at2"/>
<dbReference type="Proteomes" id="UP000008816">
    <property type="component" value="Chromosome"/>
</dbReference>
<dbReference type="GO" id="GO:0005886">
    <property type="term" value="C:plasma membrane"/>
    <property type="evidence" value="ECO:0000318"/>
    <property type="project" value="GO_Central"/>
</dbReference>
<dbReference type="GO" id="GO:0005524">
    <property type="term" value="F:ATP binding"/>
    <property type="evidence" value="ECO:0007669"/>
    <property type="project" value="UniProtKB-KW"/>
</dbReference>
<dbReference type="GO" id="GO:0016887">
    <property type="term" value="F:ATP hydrolysis activity"/>
    <property type="evidence" value="ECO:0007669"/>
    <property type="project" value="InterPro"/>
</dbReference>
<dbReference type="GO" id="GO:0022857">
    <property type="term" value="F:transmembrane transporter activity"/>
    <property type="evidence" value="ECO:0000318"/>
    <property type="project" value="GO_Central"/>
</dbReference>
<dbReference type="GO" id="GO:0006824">
    <property type="term" value="P:cobalt ion transport"/>
    <property type="evidence" value="ECO:0007669"/>
    <property type="project" value="UniProtKB-KW"/>
</dbReference>
<dbReference type="GO" id="GO:0015675">
    <property type="term" value="P:nickel cation transport"/>
    <property type="evidence" value="ECO:0007669"/>
    <property type="project" value="UniProtKB-KW"/>
</dbReference>
<dbReference type="GO" id="GO:0055085">
    <property type="term" value="P:transmembrane transport"/>
    <property type="evidence" value="ECO:0000318"/>
    <property type="project" value="GO_Central"/>
</dbReference>
<dbReference type="GO" id="GO:0006829">
    <property type="term" value="P:zinc ion transport"/>
    <property type="evidence" value="ECO:0007669"/>
    <property type="project" value="UniProtKB-KW"/>
</dbReference>
<dbReference type="CDD" id="cd03257">
    <property type="entry name" value="ABC_NikE_OppD_transporters"/>
    <property type="match status" value="1"/>
</dbReference>
<dbReference type="FunFam" id="3.40.50.300:FF:002397">
    <property type="entry name" value="Oligopeptide ABC transporter, ATP-binding protein"/>
    <property type="match status" value="1"/>
</dbReference>
<dbReference type="Gene3D" id="3.40.50.300">
    <property type="entry name" value="P-loop containing nucleotide triphosphate hydrolases"/>
    <property type="match status" value="1"/>
</dbReference>
<dbReference type="InterPro" id="IPR003593">
    <property type="entry name" value="AAA+_ATPase"/>
</dbReference>
<dbReference type="InterPro" id="IPR050388">
    <property type="entry name" value="ABC_Ni/Peptide_Import"/>
</dbReference>
<dbReference type="InterPro" id="IPR003439">
    <property type="entry name" value="ABC_transporter-like_ATP-bd"/>
</dbReference>
<dbReference type="InterPro" id="IPR017871">
    <property type="entry name" value="ABC_transporter-like_CS"/>
</dbReference>
<dbReference type="InterPro" id="IPR027417">
    <property type="entry name" value="P-loop_NTPase"/>
</dbReference>
<dbReference type="NCBIfam" id="NF047578">
    <property type="entry name" value="opine_ATP_CntD"/>
    <property type="match status" value="1"/>
</dbReference>
<dbReference type="NCBIfam" id="NF047576">
    <property type="entry name" value="opine_ATP_CntF"/>
    <property type="match status" value="1"/>
</dbReference>
<dbReference type="PANTHER" id="PTHR43297:SF2">
    <property type="entry name" value="DIPEPTIDE TRANSPORT ATP-BINDING PROTEIN DPPD"/>
    <property type="match status" value="1"/>
</dbReference>
<dbReference type="PANTHER" id="PTHR43297">
    <property type="entry name" value="OLIGOPEPTIDE TRANSPORT ATP-BINDING PROTEIN APPD"/>
    <property type="match status" value="1"/>
</dbReference>
<dbReference type="Pfam" id="PF00005">
    <property type="entry name" value="ABC_tran"/>
    <property type="match status" value="1"/>
</dbReference>
<dbReference type="SMART" id="SM00382">
    <property type="entry name" value="AAA"/>
    <property type="match status" value="1"/>
</dbReference>
<dbReference type="SUPFAM" id="SSF52540">
    <property type="entry name" value="P-loop containing nucleoside triphosphate hydrolases"/>
    <property type="match status" value="1"/>
</dbReference>
<dbReference type="PROSITE" id="PS00211">
    <property type="entry name" value="ABC_TRANSPORTER_1"/>
    <property type="match status" value="1"/>
</dbReference>
<dbReference type="PROSITE" id="PS50893">
    <property type="entry name" value="ABC_TRANSPORTER_2"/>
    <property type="match status" value="1"/>
</dbReference>
<comment type="function">
    <text evidence="2 3">Part of the ABC transporter complex CntABCDF (Opp1) involved in the uptake of metal in complex with the metallophore staphylopine (StP). Involved in the import of divalent metals ions such as nickel, cobalt and zinc. Probably responsible for energy coupling to the transport system (PubMed:23279021, PubMed:29581261). Plays a major role in nickel/cobalt import in zinc-depleted conditions. Contributes to virulence. Required for full urease activity in vitro (PubMed:23279021).</text>
</comment>
<comment type="activity regulation">
    <text evidence="2">Nickel/cobalt import is reduced in the presence of zinc.</text>
</comment>
<comment type="subunit">
    <text evidence="6 7">The complex is composed of two ATP-binding proteins (CntD and CntF), two transmembrane proteins (CntB and CntC) and a solute-binding protein (CntA).</text>
</comment>
<comment type="subcellular location">
    <subcellularLocation>
        <location evidence="5">Cell membrane</location>
        <topology evidence="5">Peripheral membrane protein</topology>
    </subcellularLocation>
</comment>
<comment type="induction">
    <text evidence="2">Repressed by zinc.</text>
</comment>
<comment type="disruption phenotype">
    <text evidence="2">Deletion of the cntABCDF genes decreases nickel and cobalt intracellular levels and decreases virulence.</text>
</comment>
<comment type="similarity">
    <text evidence="5">Belongs to the ABC transporter superfamily.</text>
</comment>
<gene>
    <name evidence="4" type="primary">cntD</name>
    <name evidence="4" type="synonym">opp1D</name>
    <name evidence="8" type="ordered locus">SAOUHSC_02764</name>
</gene>
<name>CNTD_STAA8</name>
<proteinExistence type="evidence at protein level"/>
<sequence length="271" mass="30469">MTLLTVKHLTITDTWTDQPLVSDVNFTLTKGETLGVIGESGSGKSITCKSIIGLNPERLGVTGEIIFDGTSMLSLSESQLKKYRGKDIAMVMQQGSRAFDPSTTVGKQMFETMKVHTSMSTQEIEKTLIEYMDYLSLKDPKRILKSYPYMLSGGMLQRLMIALALALKPKLIIADEPTTALDTITQYDVLEAFIDIKKHFDCAMIFISHDLTVINKIADRVVVMKNGQLIEQGTRESVLHHPEHVYTKYLLSTKKKINDHFKHVMRGDVHD</sequence>
<keyword id="KW-0067">ATP-binding</keyword>
<keyword id="KW-1003">Cell membrane</keyword>
<keyword id="KW-0170">Cobalt</keyword>
<keyword id="KW-0171">Cobalt transport</keyword>
<keyword id="KW-0406">Ion transport</keyword>
<keyword id="KW-0472">Membrane</keyword>
<keyword id="KW-0533">Nickel</keyword>
<keyword id="KW-0921">Nickel transport</keyword>
<keyword id="KW-0547">Nucleotide-binding</keyword>
<keyword id="KW-1185">Reference proteome</keyword>
<keyword id="KW-1278">Translocase</keyword>
<keyword id="KW-0813">Transport</keyword>
<keyword id="KW-0862">Zinc</keyword>
<keyword id="KW-0864">Zinc transport</keyword>
<feature type="chain" id="PRO_0000447275" description="Metal-staphylopine import system ATP-binding protein CntD">
    <location>
        <begin position="1"/>
        <end position="271"/>
    </location>
</feature>
<feature type="domain" description="ABC transporter" evidence="1">
    <location>
        <begin position="6"/>
        <end position="251"/>
    </location>
</feature>
<feature type="binding site" evidence="1">
    <location>
        <begin position="38"/>
        <end position="45"/>
    </location>
    <ligand>
        <name>ATP</name>
        <dbReference type="ChEBI" id="CHEBI:30616"/>
    </ligand>
</feature>
<protein>
    <recommendedName>
        <fullName evidence="5">Metal-staphylopine import system ATP-binding protein CntD</fullName>
        <ecNumber evidence="6">7.2.2.-</ecNumber>
    </recommendedName>
</protein>
<organism>
    <name type="scientific">Staphylococcus aureus (strain NCTC 8325 / PS 47)</name>
    <dbReference type="NCBI Taxonomy" id="93061"/>
    <lineage>
        <taxon>Bacteria</taxon>
        <taxon>Bacillati</taxon>
        <taxon>Bacillota</taxon>
        <taxon>Bacilli</taxon>
        <taxon>Bacillales</taxon>
        <taxon>Staphylococcaceae</taxon>
        <taxon>Staphylococcus</taxon>
    </lineage>
</organism>
<evidence type="ECO:0000255" key="1">
    <source>
        <dbReference type="PROSITE-ProRule" id="PRU00434"/>
    </source>
</evidence>
<evidence type="ECO:0000269" key="2">
    <source>
    </source>
</evidence>
<evidence type="ECO:0000269" key="3">
    <source>
    </source>
</evidence>
<evidence type="ECO:0000303" key="4">
    <source>
    </source>
</evidence>
<evidence type="ECO:0000305" key="5"/>
<evidence type="ECO:0000305" key="6">
    <source>
    </source>
</evidence>
<evidence type="ECO:0000305" key="7">
    <source>
    </source>
</evidence>
<evidence type="ECO:0000312" key="8">
    <source>
        <dbReference type="EMBL" id="ABD31768.1"/>
    </source>
</evidence>
<accession>Q2FVF0</accession>